<protein>
    <recommendedName>
        <fullName>UPF0324 membrane protein PP_3661</fullName>
    </recommendedName>
</protein>
<dbReference type="EMBL" id="AE015451">
    <property type="protein sequence ID" value="AAN69261.1"/>
    <property type="molecule type" value="Genomic_DNA"/>
</dbReference>
<dbReference type="RefSeq" id="NP_745797.1">
    <property type="nucleotide sequence ID" value="NC_002947.4"/>
</dbReference>
<dbReference type="RefSeq" id="WP_010954501.1">
    <property type="nucleotide sequence ID" value="NZ_CP169744.1"/>
</dbReference>
<dbReference type="STRING" id="160488.PP_3661"/>
<dbReference type="PaxDb" id="160488-PP_3661"/>
<dbReference type="KEGG" id="ppu:PP_3661"/>
<dbReference type="PATRIC" id="fig|160488.4.peg.3896"/>
<dbReference type="eggNOG" id="COG2855">
    <property type="taxonomic scope" value="Bacteria"/>
</dbReference>
<dbReference type="HOGENOM" id="CLU_033541_0_0_6"/>
<dbReference type="OrthoDB" id="9805703at2"/>
<dbReference type="PhylomeDB" id="Q88GQ7"/>
<dbReference type="BioCyc" id="PPUT160488:G1G01-3899-MONOMER"/>
<dbReference type="Proteomes" id="UP000000556">
    <property type="component" value="Chromosome"/>
</dbReference>
<dbReference type="GO" id="GO:0005886">
    <property type="term" value="C:plasma membrane"/>
    <property type="evidence" value="ECO:0007669"/>
    <property type="project" value="UniProtKB-SubCell"/>
</dbReference>
<dbReference type="InterPro" id="IPR018383">
    <property type="entry name" value="UPF0324_pro"/>
</dbReference>
<dbReference type="InterPro" id="IPR004630">
    <property type="entry name" value="UPF0324_YeiH-like"/>
</dbReference>
<dbReference type="NCBIfam" id="TIGR00698">
    <property type="entry name" value="YeiH family putative sulfate export transporter"/>
    <property type="match status" value="1"/>
</dbReference>
<dbReference type="PANTHER" id="PTHR30106">
    <property type="entry name" value="INNER MEMBRANE PROTEIN YEIH-RELATED"/>
    <property type="match status" value="1"/>
</dbReference>
<dbReference type="PANTHER" id="PTHR30106:SF2">
    <property type="entry name" value="UPF0324 INNER MEMBRANE PROTEIN YEIH"/>
    <property type="match status" value="1"/>
</dbReference>
<dbReference type="Pfam" id="PF03601">
    <property type="entry name" value="Cons_hypoth698"/>
    <property type="match status" value="1"/>
</dbReference>
<comment type="subcellular location">
    <subcellularLocation>
        <location evidence="2">Cell membrane</location>
        <topology evidence="2">Multi-pass membrane protein</topology>
    </subcellularLocation>
</comment>
<comment type="similarity">
    <text evidence="2">Belongs to the UPF0324 family.</text>
</comment>
<reference key="1">
    <citation type="journal article" date="2002" name="Environ. Microbiol.">
        <title>Complete genome sequence and comparative analysis of the metabolically versatile Pseudomonas putida KT2440.</title>
        <authorList>
            <person name="Nelson K.E."/>
            <person name="Weinel C."/>
            <person name="Paulsen I.T."/>
            <person name="Dodson R.J."/>
            <person name="Hilbert H."/>
            <person name="Martins dos Santos V.A.P."/>
            <person name="Fouts D.E."/>
            <person name="Gill S.R."/>
            <person name="Pop M."/>
            <person name="Holmes M."/>
            <person name="Brinkac L.M."/>
            <person name="Beanan M.J."/>
            <person name="DeBoy R.T."/>
            <person name="Daugherty S.C."/>
            <person name="Kolonay J.F."/>
            <person name="Madupu R."/>
            <person name="Nelson W.C."/>
            <person name="White O."/>
            <person name="Peterson J.D."/>
            <person name="Khouri H.M."/>
            <person name="Hance I."/>
            <person name="Chris Lee P."/>
            <person name="Holtzapple E.K."/>
            <person name="Scanlan D."/>
            <person name="Tran K."/>
            <person name="Moazzez A."/>
            <person name="Utterback T.R."/>
            <person name="Rizzo M."/>
            <person name="Lee K."/>
            <person name="Kosack D."/>
            <person name="Moestl D."/>
            <person name="Wedler H."/>
            <person name="Lauber J."/>
            <person name="Stjepandic D."/>
            <person name="Hoheisel J."/>
            <person name="Straetz M."/>
            <person name="Heim S."/>
            <person name="Kiewitz C."/>
            <person name="Eisen J.A."/>
            <person name="Timmis K.N."/>
            <person name="Duesterhoeft A."/>
            <person name="Tuemmler B."/>
            <person name="Fraser C.M."/>
        </authorList>
    </citation>
    <scope>NUCLEOTIDE SEQUENCE [LARGE SCALE GENOMIC DNA]</scope>
    <source>
        <strain>ATCC 47054 / DSM 6125 / CFBP 8728 / NCIMB 11950 / KT2440</strain>
    </source>
</reference>
<keyword id="KW-1003">Cell membrane</keyword>
<keyword id="KW-0472">Membrane</keyword>
<keyword id="KW-1185">Reference proteome</keyword>
<keyword id="KW-0812">Transmembrane</keyword>
<keyword id="KW-1133">Transmembrane helix</keyword>
<evidence type="ECO:0000255" key="1"/>
<evidence type="ECO:0000305" key="2"/>
<accession>Q88GQ7</accession>
<organism>
    <name type="scientific">Pseudomonas putida (strain ATCC 47054 / DSM 6125 / CFBP 8728 / NCIMB 11950 / KT2440)</name>
    <dbReference type="NCBI Taxonomy" id="160488"/>
    <lineage>
        <taxon>Bacteria</taxon>
        <taxon>Pseudomonadati</taxon>
        <taxon>Pseudomonadota</taxon>
        <taxon>Gammaproteobacteria</taxon>
        <taxon>Pseudomonadales</taxon>
        <taxon>Pseudomonadaceae</taxon>
        <taxon>Pseudomonas</taxon>
    </lineage>
</organism>
<sequence>MATVPSNPAFAPTLSTRGRLNGILFVALFAVAVTQLAAMPAIANLGISPLIVGIVAGALYGNALRDGVPASWAAGINFSARGLLRIAVAFFGLRVSLQEIAEVGWSGLIVSVLVVTSTLLIGLWCGMKVFKLDRDTALLTAAGSAICGAAAVLAFESALRSAPHKSAMAVGSVVLFGTLSMFLYPLAINAGWLHLDTMGAGLLLGGTVHEVAQVVGAASNVSPEATHVATIVKMTRVMLLVPVLLVVGLWISRSRKAGQAQGNGRIAMPWFAFGFLALVLVNSMQVLPGSVTQAVNSLDTFALTMAMTALGMETRFSQIRQAGPRALATGAILNLWLVGGGLAITLGVQKLLG</sequence>
<name>Y3661_PSEPK</name>
<proteinExistence type="inferred from homology"/>
<gene>
    <name type="ordered locus">PP_3661</name>
</gene>
<feature type="chain" id="PRO_0000157440" description="UPF0324 membrane protein PP_3661">
    <location>
        <begin position="1"/>
        <end position="353"/>
    </location>
</feature>
<feature type="transmembrane region" description="Helical" evidence="1">
    <location>
        <begin position="20"/>
        <end position="42"/>
    </location>
</feature>
<feature type="transmembrane region" description="Helical" evidence="1">
    <location>
        <begin position="70"/>
        <end position="92"/>
    </location>
</feature>
<feature type="transmembrane region" description="Helical" evidence="1">
    <location>
        <begin position="105"/>
        <end position="127"/>
    </location>
</feature>
<feature type="transmembrane region" description="Helical" evidence="1">
    <location>
        <begin position="137"/>
        <end position="159"/>
    </location>
</feature>
<feature type="transmembrane region" description="Helical" evidence="1">
    <location>
        <begin position="166"/>
        <end position="188"/>
    </location>
</feature>
<feature type="transmembrane region" description="Helical" evidence="1">
    <location>
        <begin position="234"/>
        <end position="253"/>
    </location>
</feature>
<feature type="transmembrane region" description="Helical" evidence="1">
    <location>
        <begin position="266"/>
        <end position="288"/>
    </location>
</feature>
<feature type="transmembrane region" description="Helical" evidence="1">
    <location>
        <begin position="326"/>
        <end position="348"/>
    </location>
</feature>